<accession>Q9FK72</accession>
<proteinExistence type="evidence at transcript level"/>
<name>HFA4C_ARATH</name>
<protein>
    <recommendedName>
        <fullName>Heat stress transcription factor A-4c</fullName>
        <shortName>AtHsfA4c</shortName>
    </recommendedName>
    <alternativeName>
        <fullName>AtHsf-20</fullName>
    </alternativeName>
    <alternativeName>
        <fullName>Protein ROOT HANDEDNESS 1</fullName>
    </alternativeName>
</protein>
<sequence length="345" mass="39648">MDENNGGSSSLPPFLTKTYEMVDDSSSDSVVAWSENNKSFIVKNPAEFSRDLLPRFFKHKNFSSFIRQLNTYGFRKVDPEKWEFLNDDFVRGRPYLMKNIHRRKPVHSHSLVNLQAQNPLTESERRSMEDQIERLKNEKEGLLAELQNQEQERKEFELQVTTLKDRLQHMEQHQKSIVAYVSQVLGKPGLSLNLENHERRKRRFQENSLPPSSSHIEQVEKLESSLTFWENLVSESCEKSGLQSSSMDHDAAESSLSIGDTRPKSSKIDMNSEPPVTVTAPAPKTGVNDDFWEQCLTENPGSTEQQEVQSERRDVGNDNNGNKIGNQRTYWWNSGNVNNITEKAS</sequence>
<comment type="function">
    <text evidence="5">Transcriptional activator that specifically binds DNA sequence 5'-AGAAnnTTCT-3' known as heat shock promoter elements (HSE). May be involved in general response to auxin.</text>
</comment>
<comment type="subunit">
    <text evidence="1">Homotrimer.</text>
</comment>
<comment type="subcellular location">
    <subcellularLocation>
        <location evidence="6">Nucleus</location>
    </subcellularLocation>
</comment>
<comment type="alternative products">
    <event type="alternative splicing"/>
    <isoform>
        <id>Q9FK72-1</id>
        <name>1</name>
        <sequence type="displayed"/>
    </isoform>
    <text>A number of isoforms are produced. According to EST sequences.</text>
</comment>
<comment type="tissue specificity">
    <text evidence="5">Expressed in roots, seedlings and at lower levels in leaves.</text>
</comment>
<comment type="induction">
    <text evidence="5">By heat and cold stresses and the herbicide 2,4-dichlorophenoxyacetic acid (2,4-D, auxin analog).</text>
</comment>
<comment type="domain">
    <text evidence="4">The hydrophobic-rich region (HR-A/B) corresponds to the oligomerization domain. AHA motifs are transcriptional activator elements.</text>
</comment>
<comment type="PTM">
    <text evidence="1">Exhibits temperature-dependent phosphorylation.</text>
</comment>
<comment type="disruption phenotype">
    <text evidence="5">Plants display minimal right-handed slanting in roots, reduced gravitropic response, reduced number of lateral roots, reduced size of shoot and root in the seedlings and increased resistance to 2,4-D.</text>
</comment>
<comment type="similarity">
    <text evidence="6">Belongs to the HSF family. Class A subfamily.</text>
</comment>
<reference key="1">
    <citation type="book" date="2002" name="Proceedings of the 13th international conference on Arabidopsis research">
        <title>The AtRHA1 gene of Arabidopsis: structure and possible functions.</title>
        <authorList>
            <person name="Piconese S."/>
            <person name="Faggiano M."/>
            <person name="Rosi C."/>
            <person name="Migliaccio F."/>
        </authorList>
    </citation>
    <scope>NUCLEOTIDE SEQUENCE [GENOMIC DNA]</scope>
    <source>
        <strain>cv. Wassilewskija</strain>
    </source>
</reference>
<reference key="2">
    <citation type="journal article" date="1998" name="DNA Res.">
        <title>Structural analysis of Arabidopsis thaliana chromosome 5. VI. Sequence features of the regions of 1,367,185 bp covered by 19 physically assigned P1 and TAC clones.</title>
        <authorList>
            <person name="Kotani H."/>
            <person name="Nakamura Y."/>
            <person name="Sato S."/>
            <person name="Asamizu E."/>
            <person name="Kaneko T."/>
            <person name="Miyajima N."/>
            <person name="Tabata S."/>
        </authorList>
    </citation>
    <scope>NUCLEOTIDE SEQUENCE [LARGE SCALE GENOMIC DNA]</scope>
    <source>
        <strain>cv. Columbia</strain>
    </source>
</reference>
<reference key="3">
    <citation type="journal article" date="2017" name="Plant J.">
        <title>Araport11: a complete reannotation of the Arabidopsis thaliana reference genome.</title>
        <authorList>
            <person name="Cheng C.Y."/>
            <person name="Krishnakumar V."/>
            <person name="Chan A.P."/>
            <person name="Thibaud-Nissen F."/>
            <person name="Schobel S."/>
            <person name="Town C.D."/>
        </authorList>
    </citation>
    <scope>GENOME REANNOTATION</scope>
    <source>
        <strain>cv. Columbia</strain>
    </source>
</reference>
<reference key="4">
    <citation type="submission" date="2004-10" db="EMBL/GenBank/DDBJ databases">
        <title>Arabidopsis ORF clones.</title>
        <authorList>
            <person name="Kim C.J."/>
            <person name="Chen H."/>
            <person name="Cheuk R.F."/>
            <person name="Shinn P."/>
            <person name="Ecker J.R."/>
        </authorList>
    </citation>
    <scope>NUCLEOTIDE SEQUENCE [LARGE SCALE MRNA]</scope>
    <source>
        <strain>cv. Columbia</strain>
    </source>
</reference>
<reference key="5">
    <citation type="submission" date="2006-07" db="EMBL/GenBank/DDBJ databases">
        <title>Large-scale analysis of RIKEN Arabidopsis full-length (RAFL) cDNAs.</title>
        <authorList>
            <person name="Totoki Y."/>
            <person name="Seki M."/>
            <person name="Ishida J."/>
            <person name="Nakajima M."/>
            <person name="Enju A."/>
            <person name="Kamiya A."/>
            <person name="Narusaka M."/>
            <person name="Shin-i T."/>
            <person name="Nakagawa M."/>
            <person name="Sakamoto N."/>
            <person name="Oishi K."/>
            <person name="Kohara Y."/>
            <person name="Kobayashi M."/>
            <person name="Toyoda A."/>
            <person name="Sakaki Y."/>
            <person name="Sakurai T."/>
            <person name="Iida K."/>
            <person name="Akiyama K."/>
            <person name="Satou M."/>
            <person name="Toyoda T."/>
            <person name="Konagaya A."/>
            <person name="Carninci P."/>
            <person name="Kawai J."/>
            <person name="Hayashizaki Y."/>
            <person name="Shinozaki K."/>
        </authorList>
    </citation>
    <scope>NUCLEOTIDE SEQUENCE [LARGE SCALE MRNA]</scope>
    <source>
        <strain>cv. Columbia</strain>
    </source>
</reference>
<reference key="6">
    <citation type="journal article" date="2001" name="Cell Stress Chaperones">
        <title>Arabidopsis and the heat stress transcription factor world: how many heat stress transcription factors do we need?</title>
        <authorList>
            <person name="Nover L."/>
            <person name="Bharti K."/>
            <person name="Doering P."/>
            <person name="Mishra S.K."/>
            <person name="Ganguli A."/>
            <person name="Scharf K.-D."/>
        </authorList>
    </citation>
    <scope>GENE FAMILY</scope>
    <scope>NOMENCLATURE</scope>
    <scope>DOMAIN AHA</scope>
</reference>
<reference key="7">
    <citation type="journal article" date="2008" name="J. Exp. Bot.">
        <title>A new mutant of Arabidopsis disturbed in its roots, right-handed slanting, and gravitropism defines a gene that encodes a heat-shock factor.</title>
        <authorList>
            <person name="Fortunati A."/>
            <person name="Piconese S."/>
            <person name="Tassone P."/>
            <person name="Ferrari S."/>
            <person name="Migliaccio F."/>
        </authorList>
    </citation>
    <scope>FUNCTION</scope>
    <scope>TISSUE SPECIFICITY</scope>
    <scope>INDUCTION</scope>
    <scope>DISRUPTION PHENOTYPE</scope>
</reference>
<reference key="8">
    <citation type="journal article" date="2008" name="J. Genet. Genomics">
        <title>Genome-wide analysis of heat shock transcription factor families in rice and Arabidopsis.</title>
        <authorList>
            <person name="Guo J."/>
            <person name="Wu J."/>
            <person name="Ji Q."/>
            <person name="Wang C."/>
            <person name="Luo L."/>
            <person name="Yuan Y."/>
            <person name="Wang Y."/>
            <person name="Wang J."/>
        </authorList>
    </citation>
    <scope>GENE FAMILY</scope>
    <scope>NOMENCLATURE</scope>
</reference>
<keyword id="KW-0010">Activator</keyword>
<keyword id="KW-0025">Alternative splicing</keyword>
<keyword id="KW-0238">DNA-binding</keyword>
<keyword id="KW-0539">Nucleus</keyword>
<keyword id="KW-0597">Phosphoprotein</keyword>
<keyword id="KW-1185">Reference proteome</keyword>
<keyword id="KW-0677">Repeat</keyword>
<keyword id="KW-0346">Stress response</keyword>
<keyword id="KW-0804">Transcription</keyword>
<keyword id="KW-0805">Transcription regulation</keyword>
<evidence type="ECO:0000250" key="1"/>
<evidence type="ECO:0000255" key="2"/>
<evidence type="ECO:0000256" key="3">
    <source>
        <dbReference type="SAM" id="MobiDB-lite"/>
    </source>
</evidence>
<evidence type="ECO:0000269" key="4">
    <source>
    </source>
</evidence>
<evidence type="ECO:0000269" key="5">
    <source>
    </source>
</evidence>
<evidence type="ECO:0000305" key="6"/>
<gene>
    <name type="primary">HSFA4C</name>
    <name type="synonym">HSF20</name>
    <name type="synonym">RHA1</name>
    <name type="ordered locus">At5g45710</name>
    <name type="ORF">MRA19.11</name>
</gene>
<feature type="chain" id="PRO_0000270805" description="Heat stress transcription factor A-4c">
    <location>
        <begin position="1"/>
        <end position="345"/>
    </location>
</feature>
<feature type="DNA-binding region" evidence="1">
    <location>
        <begin position="11"/>
        <end position="105"/>
    </location>
</feature>
<feature type="region of interest" description="Hydrophobic repeat HR-A/B">
    <location>
        <begin position="119"/>
        <end position="185"/>
    </location>
</feature>
<feature type="region of interest" description="Disordered" evidence="3">
    <location>
        <begin position="240"/>
        <end position="329"/>
    </location>
</feature>
<feature type="short sequence motif" description="Nuclear localization signal" evidence="2">
    <location>
        <begin position="199"/>
        <end position="203"/>
    </location>
</feature>
<feature type="short sequence motif" description="AHA1">
    <location>
        <begin position="226"/>
        <end position="235"/>
    </location>
</feature>
<feature type="short sequence motif" description="AHA2">
    <location>
        <begin position="289"/>
        <end position="298"/>
    </location>
</feature>
<feature type="compositionally biased region" description="Low complexity" evidence="3">
    <location>
        <begin position="274"/>
        <end position="283"/>
    </location>
</feature>
<feature type="compositionally biased region" description="Polar residues" evidence="3">
    <location>
        <begin position="296"/>
        <end position="308"/>
    </location>
</feature>
<feature type="compositionally biased region" description="Polar residues" evidence="3">
    <location>
        <begin position="317"/>
        <end position="329"/>
    </location>
</feature>
<dbReference type="EMBL" id="AY350739">
    <property type="protein sequence ID" value="AAQ54332.1"/>
    <property type="molecule type" value="Genomic_DNA"/>
</dbReference>
<dbReference type="EMBL" id="AB012245">
    <property type="protein sequence ID" value="BAB09213.1"/>
    <property type="molecule type" value="Genomic_DNA"/>
</dbReference>
<dbReference type="EMBL" id="CP002688">
    <property type="protein sequence ID" value="AED95287.1"/>
    <property type="molecule type" value="Genomic_DNA"/>
</dbReference>
<dbReference type="EMBL" id="CP002688">
    <property type="protein sequence ID" value="ANM70169.1"/>
    <property type="molecule type" value="Genomic_DNA"/>
</dbReference>
<dbReference type="EMBL" id="BT015049">
    <property type="protein sequence ID" value="AAT71921.1"/>
    <property type="molecule type" value="mRNA"/>
</dbReference>
<dbReference type="EMBL" id="BT015843">
    <property type="protein sequence ID" value="AAU94406.1"/>
    <property type="molecule type" value="mRNA"/>
</dbReference>
<dbReference type="EMBL" id="AK229058">
    <property type="protein sequence ID" value="BAF00940.1"/>
    <property type="molecule type" value="mRNA"/>
</dbReference>
<dbReference type="RefSeq" id="NP_001331800.1">
    <molecule id="Q9FK72-1"/>
    <property type="nucleotide sequence ID" value="NM_001344637.1"/>
</dbReference>
<dbReference type="RefSeq" id="NP_199383.1">
    <molecule id="Q9FK72-1"/>
    <property type="nucleotide sequence ID" value="NM_123938.4"/>
</dbReference>
<dbReference type="SMR" id="Q9FK72"/>
<dbReference type="BioGRID" id="19859">
    <property type="interactions" value="9"/>
</dbReference>
<dbReference type="FunCoup" id="Q9FK72">
    <property type="interactions" value="1066"/>
</dbReference>
<dbReference type="IntAct" id="Q9FK72">
    <property type="interactions" value="9"/>
</dbReference>
<dbReference type="STRING" id="3702.Q9FK72"/>
<dbReference type="PaxDb" id="3702-AT5G45710.1"/>
<dbReference type="ProteomicsDB" id="230274">
    <molecule id="Q9FK72-1"/>
</dbReference>
<dbReference type="EnsemblPlants" id="AT5G45710.1">
    <molecule id="Q9FK72-1"/>
    <property type="protein sequence ID" value="AT5G45710.1"/>
    <property type="gene ID" value="AT5G45710"/>
</dbReference>
<dbReference type="EnsemblPlants" id="AT5G45710.3">
    <molecule id="Q9FK72-1"/>
    <property type="protein sequence ID" value="AT5G45710.3"/>
    <property type="gene ID" value="AT5G45710"/>
</dbReference>
<dbReference type="GeneID" id="834610"/>
<dbReference type="Gramene" id="AT5G45710.1">
    <molecule id="Q9FK72-1"/>
    <property type="protein sequence ID" value="AT5G45710.1"/>
    <property type="gene ID" value="AT5G45710"/>
</dbReference>
<dbReference type="Gramene" id="AT5G45710.3">
    <molecule id="Q9FK72-1"/>
    <property type="protein sequence ID" value="AT5G45710.3"/>
    <property type="gene ID" value="AT5G45710"/>
</dbReference>
<dbReference type="KEGG" id="ath:AT5G45710"/>
<dbReference type="Araport" id="AT5G45710"/>
<dbReference type="TAIR" id="AT5G45710">
    <property type="gene designation" value="RHA1"/>
</dbReference>
<dbReference type="eggNOG" id="KOG0627">
    <property type="taxonomic scope" value="Eukaryota"/>
</dbReference>
<dbReference type="HOGENOM" id="CLU_030308_0_0_1"/>
<dbReference type="InParanoid" id="Q9FK72"/>
<dbReference type="OMA" id="HDATECQ"/>
<dbReference type="PhylomeDB" id="Q9FK72"/>
<dbReference type="PRO" id="PR:Q9FK72"/>
<dbReference type="Proteomes" id="UP000006548">
    <property type="component" value="Chromosome 5"/>
</dbReference>
<dbReference type="ExpressionAtlas" id="Q9FK72">
    <property type="expression patterns" value="baseline and differential"/>
</dbReference>
<dbReference type="GO" id="GO:0005634">
    <property type="term" value="C:nucleus"/>
    <property type="evidence" value="ECO:0007669"/>
    <property type="project" value="UniProtKB-SubCell"/>
</dbReference>
<dbReference type="GO" id="GO:0003700">
    <property type="term" value="F:DNA-binding transcription factor activity"/>
    <property type="evidence" value="ECO:0000250"/>
    <property type="project" value="TAIR"/>
</dbReference>
<dbReference type="GO" id="GO:0000976">
    <property type="term" value="F:transcription cis-regulatory region binding"/>
    <property type="evidence" value="ECO:0000353"/>
    <property type="project" value="TAIR"/>
</dbReference>
<dbReference type="GO" id="GO:0048530">
    <property type="term" value="P:fruit morphogenesis"/>
    <property type="evidence" value="ECO:0000315"/>
    <property type="project" value="TAIR"/>
</dbReference>
<dbReference type="GO" id="GO:0048527">
    <property type="term" value="P:lateral root development"/>
    <property type="evidence" value="ECO:0000315"/>
    <property type="project" value="TAIR"/>
</dbReference>
<dbReference type="GO" id="GO:0009958">
    <property type="term" value="P:positive gravitropism"/>
    <property type="evidence" value="ECO:0000315"/>
    <property type="project" value="TAIR"/>
</dbReference>
<dbReference type="GO" id="GO:0009733">
    <property type="term" value="P:response to auxin"/>
    <property type="evidence" value="ECO:0000315"/>
    <property type="project" value="TAIR"/>
</dbReference>
<dbReference type="GO" id="GO:0009408">
    <property type="term" value="P:response to heat"/>
    <property type="evidence" value="ECO:0000270"/>
    <property type="project" value="TAIR"/>
</dbReference>
<dbReference type="GO" id="GO:0048364">
    <property type="term" value="P:root development"/>
    <property type="evidence" value="ECO:0000315"/>
    <property type="project" value="TAIR"/>
</dbReference>
<dbReference type="FunFam" id="1.10.10.10:FF:000057">
    <property type="entry name" value="Heat shock transcription factor 1"/>
    <property type="match status" value="1"/>
</dbReference>
<dbReference type="Gene3D" id="1.10.10.10">
    <property type="entry name" value="Winged helix-like DNA-binding domain superfamily/Winged helix DNA-binding domain"/>
    <property type="match status" value="1"/>
</dbReference>
<dbReference type="InterPro" id="IPR000232">
    <property type="entry name" value="HSF_DNA-bd"/>
</dbReference>
<dbReference type="InterPro" id="IPR036388">
    <property type="entry name" value="WH-like_DNA-bd_sf"/>
</dbReference>
<dbReference type="InterPro" id="IPR036390">
    <property type="entry name" value="WH_DNA-bd_sf"/>
</dbReference>
<dbReference type="PANTHER" id="PTHR10015">
    <property type="entry name" value="HEAT SHOCK TRANSCRIPTION FACTOR"/>
    <property type="match status" value="1"/>
</dbReference>
<dbReference type="PANTHER" id="PTHR10015:SF408">
    <property type="entry name" value="HEAT STRESS TRANSCRIPTION FACTOR A-4C"/>
    <property type="match status" value="1"/>
</dbReference>
<dbReference type="Pfam" id="PF00447">
    <property type="entry name" value="HSF_DNA-bind"/>
    <property type="match status" value="1"/>
</dbReference>
<dbReference type="PRINTS" id="PR00056">
    <property type="entry name" value="HSFDOMAIN"/>
</dbReference>
<dbReference type="SMART" id="SM00415">
    <property type="entry name" value="HSF"/>
    <property type="match status" value="1"/>
</dbReference>
<dbReference type="SUPFAM" id="SSF46785">
    <property type="entry name" value="Winged helix' DNA-binding domain"/>
    <property type="match status" value="1"/>
</dbReference>
<dbReference type="PROSITE" id="PS00434">
    <property type="entry name" value="HSF_DOMAIN"/>
    <property type="match status" value="1"/>
</dbReference>
<organism>
    <name type="scientific">Arabidopsis thaliana</name>
    <name type="common">Mouse-ear cress</name>
    <dbReference type="NCBI Taxonomy" id="3702"/>
    <lineage>
        <taxon>Eukaryota</taxon>
        <taxon>Viridiplantae</taxon>
        <taxon>Streptophyta</taxon>
        <taxon>Embryophyta</taxon>
        <taxon>Tracheophyta</taxon>
        <taxon>Spermatophyta</taxon>
        <taxon>Magnoliopsida</taxon>
        <taxon>eudicotyledons</taxon>
        <taxon>Gunneridae</taxon>
        <taxon>Pentapetalae</taxon>
        <taxon>rosids</taxon>
        <taxon>malvids</taxon>
        <taxon>Brassicales</taxon>
        <taxon>Brassicaceae</taxon>
        <taxon>Camelineae</taxon>
        <taxon>Arabidopsis</taxon>
    </lineage>
</organism>